<evidence type="ECO:0000250" key="1"/>
<evidence type="ECO:0000255" key="2"/>
<evidence type="ECO:0000305" key="3"/>
<name>FLIP_BUCAI</name>
<protein>
    <recommendedName>
        <fullName>Flagellar biosynthetic protein FliP</fullName>
    </recommendedName>
</protein>
<gene>
    <name type="primary">fliP</name>
    <name type="ordered locus">BU082</name>
</gene>
<reference key="1">
    <citation type="journal article" date="2000" name="Nature">
        <title>Genome sequence of the endocellular bacterial symbiont of aphids Buchnera sp. APS.</title>
        <authorList>
            <person name="Shigenobu S."/>
            <person name="Watanabe H."/>
            <person name="Hattori M."/>
            <person name="Sakaki Y."/>
            <person name="Ishikawa H."/>
        </authorList>
    </citation>
    <scope>NUCLEOTIDE SEQUENCE [LARGE SCALE GENOMIC DNA]</scope>
    <source>
        <strain>APS</strain>
    </source>
</reference>
<keyword id="KW-0975">Bacterial flagellum</keyword>
<keyword id="KW-1005">Bacterial flagellum biogenesis</keyword>
<keyword id="KW-1006">Bacterial flagellum protein export</keyword>
<keyword id="KW-1003">Cell membrane</keyword>
<keyword id="KW-0472">Membrane</keyword>
<keyword id="KW-0653">Protein transport</keyword>
<keyword id="KW-1185">Reference proteome</keyword>
<keyword id="KW-0812">Transmembrane</keyword>
<keyword id="KW-1133">Transmembrane helix</keyword>
<keyword id="KW-0813">Transport</keyword>
<feature type="chain" id="PRO_0000191981" description="Flagellar biosynthetic protein FliP">
    <location>
        <begin position="1"/>
        <end position="379"/>
    </location>
</feature>
<feature type="transmembrane region" description="Helical" evidence="2">
    <location>
        <begin position="23"/>
        <end position="43"/>
    </location>
</feature>
<feature type="transmembrane region" description="Helical" evidence="2">
    <location>
        <begin position="140"/>
        <end position="160"/>
    </location>
</feature>
<feature type="transmembrane region" description="Helical" evidence="2">
    <location>
        <begin position="178"/>
        <end position="198"/>
    </location>
</feature>
<feature type="transmembrane region" description="Helical" evidence="2">
    <location>
        <begin position="222"/>
        <end position="242"/>
    </location>
</feature>
<feature type="transmembrane region" description="Helical" evidence="2">
    <location>
        <begin position="319"/>
        <end position="339"/>
    </location>
</feature>
<feature type="transmembrane region" description="Helical" evidence="2">
    <location>
        <begin position="357"/>
        <end position="377"/>
    </location>
</feature>
<dbReference type="EMBL" id="BA000003">
    <property type="protein sequence ID" value="BAB12802.1"/>
    <property type="molecule type" value="Genomic_DNA"/>
</dbReference>
<dbReference type="RefSeq" id="NP_239916.1">
    <property type="nucleotide sequence ID" value="NC_002528.1"/>
</dbReference>
<dbReference type="SMR" id="P57184"/>
<dbReference type="STRING" id="563178.BUAP5A_081"/>
<dbReference type="EnsemblBacteria" id="BAB12802">
    <property type="protein sequence ID" value="BAB12802"/>
    <property type="gene ID" value="BAB12802"/>
</dbReference>
<dbReference type="KEGG" id="buc:BU082"/>
<dbReference type="PATRIC" id="fig|107806.10.peg.88"/>
<dbReference type="eggNOG" id="COG1338">
    <property type="taxonomic scope" value="Bacteria"/>
</dbReference>
<dbReference type="eggNOG" id="COG3190">
    <property type="taxonomic scope" value="Bacteria"/>
</dbReference>
<dbReference type="HOGENOM" id="CLU_813433_0_0_6"/>
<dbReference type="Proteomes" id="UP000001806">
    <property type="component" value="Chromosome"/>
</dbReference>
<dbReference type="GO" id="GO:0009425">
    <property type="term" value="C:bacterial-type flagellum basal body"/>
    <property type="evidence" value="ECO:0007669"/>
    <property type="project" value="UniProtKB-SubCell"/>
</dbReference>
<dbReference type="GO" id="GO:0005886">
    <property type="term" value="C:plasma membrane"/>
    <property type="evidence" value="ECO:0007669"/>
    <property type="project" value="UniProtKB-SubCell"/>
</dbReference>
<dbReference type="GO" id="GO:0044781">
    <property type="term" value="P:bacterial-type flagellum organization"/>
    <property type="evidence" value="ECO:0007669"/>
    <property type="project" value="UniProtKB-KW"/>
</dbReference>
<dbReference type="GO" id="GO:0009306">
    <property type="term" value="P:protein secretion"/>
    <property type="evidence" value="ECO:0007669"/>
    <property type="project" value="InterPro"/>
</dbReference>
<dbReference type="InterPro" id="IPR022781">
    <property type="entry name" value="Flagellar_biosynth_FliO"/>
</dbReference>
<dbReference type="InterPro" id="IPR005837">
    <property type="entry name" value="FliP"/>
</dbReference>
<dbReference type="InterPro" id="IPR005838">
    <property type="entry name" value="T3SS_IM_P"/>
</dbReference>
<dbReference type="NCBIfam" id="TIGR03500">
    <property type="entry name" value="FliO_TIGR"/>
    <property type="match status" value="1"/>
</dbReference>
<dbReference type="NCBIfam" id="TIGR01103">
    <property type="entry name" value="fliP"/>
    <property type="match status" value="1"/>
</dbReference>
<dbReference type="NCBIfam" id="NF009438">
    <property type="entry name" value="PRK12797.1"/>
    <property type="match status" value="1"/>
</dbReference>
<dbReference type="PANTHER" id="PTHR30587">
    <property type="entry name" value="FLAGELLAR BIOSYNTHETIC PROTEIN FLIP"/>
    <property type="match status" value="1"/>
</dbReference>
<dbReference type="PANTHER" id="PTHR30587:SF0">
    <property type="entry name" value="FLAGELLAR BIOSYNTHETIC PROTEIN FLIP"/>
    <property type="match status" value="1"/>
</dbReference>
<dbReference type="Pfam" id="PF04347">
    <property type="entry name" value="FliO"/>
    <property type="match status" value="1"/>
</dbReference>
<dbReference type="Pfam" id="PF00813">
    <property type="entry name" value="FliP"/>
    <property type="match status" value="1"/>
</dbReference>
<dbReference type="PRINTS" id="PR00951">
    <property type="entry name" value="FLGBIOSNFLIP"/>
</dbReference>
<dbReference type="PRINTS" id="PR01302">
    <property type="entry name" value="TYPE3IMPPROT"/>
</dbReference>
<dbReference type="PROSITE" id="PS01060">
    <property type="entry name" value="FLIP_1"/>
    <property type="match status" value="1"/>
</dbReference>
<dbReference type="PROSITE" id="PS01061">
    <property type="entry name" value="FLIP_2"/>
    <property type="match status" value="1"/>
</dbReference>
<comment type="function">
    <text evidence="1">Plays a role in the flagellum-specific transport system.</text>
</comment>
<comment type="subcellular location">
    <subcellularLocation>
        <location evidence="3">Cell membrane</location>
        <topology evidence="3">Multi-pass membrane protein</topology>
    </subcellularLocation>
    <subcellularLocation>
        <location evidence="1">Bacterial flagellum basal body</location>
    </subcellularLocation>
</comment>
<comment type="similarity">
    <text evidence="3">Belongs to the FliP/MopC/SpaP family.</text>
</comment>
<accession>P57184</accession>
<sequence>MKNNLFFQSISNSLHPIFNSEKFLQIMSSLSEIILLILIFSWILKKISSFKINKIISRMKIIERLSVGSQESIILVEVKQLRLLLGVTKKNISHLHTFPSNSKDELIKETNDTLLQKNLFDRSLKNFSKTSWKKTMFYRIIPFVFLLSLCPSAHADMPGLTSHILDDGSQTWSVPVQTLVFLTSLTFLPAFLLMMTSFTRIVIVFGLLRNALGTPYAPPNQILLGLALFLTFFIMSPTFEKIYKDAYVPFSQEKMNMEDAILKGSMPLKKFMLNQIRTPDLELFSKLAHISSYKNKNDIPMRILLPSFITSELKTAFQIGFTIFIPFLIIDLVVASVLMALGMMMVPPSTISLPFKLMLFVLVDGWQLLITSLAHSFNT</sequence>
<organism>
    <name type="scientific">Buchnera aphidicola subsp. Acyrthosiphon pisum (strain APS)</name>
    <name type="common">Acyrthosiphon pisum symbiotic bacterium</name>
    <dbReference type="NCBI Taxonomy" id="107806"/>
    <lineage>
        <taxon>Bacteria</taxon>
        <taxon>Pseudomonadati</taxon>
        <taxon>Pseudomonadota</taxon>
        <taxon>Gammaproteobacteria</taxon>
        <taxon>Enterobacterales</taxon>
        <taxon>Erwiniaceae</taxon>
        <taxon>Buchnera</taxon>
    </lineage>
</organism>
<proteinExistence type="inferred from homology"/>